<reference key="1">
    <citation type="journal article" date="2000" name="DNA Res.">
        <title>Structural analysis of Arabidopsis thaliana chromosome 3. I. Sequence features of the regions of 4,504,864 bp covered by sixty P1 and TAC clones.</title>
        <authorList>
            <person name="Sato S."/>
            <person name="Nakamura Y."/>
            <person name="Kaneko T."/>
            <person name="Katoh T."/>
            <person name="Asamizu E."/>
            <person name="Tabata S."/>
        </authorList>
    </citation>
    <scope>NUCLEOTIDE SEQUENCE [LARGE SCALE GENOMIC DNA]</scope>
    <source>
        <strain>cv. Columbia</strain>
    </source>
</reference>
<reference key="2">
    <citation type="journal article" date="2017" name="Plant J.">
        <title>Araport11: a complete reannotation of the Arabidopsis thaliana reference genome.</title>
        <authorList>
            <person name="Cheng C.Y."/>
            <person name="Krishnakumar V."/>
            <person name="Chan A.P."/>
            <person name="Thibaud-Nissen F."/>
            <person name="Schobel S."/>
            <person name="Town C.D."/>
        </authorList>
    </citation>
    <scope>GENOME REANNOTATION</scope>
    <source>
        <strain>cv. Columbia</strain>
    </source>
</reference>
<reference key="3">
    <citation type="journal article" date="2003" name="Science">
        <title>Empirical analysis of transcriptional activity in the Arabidopsis genome.</title>
        <authorList>
            <person name="Yamada K."/>
            <person name="Lim J."/>
            <person name="Dale J.M."/>
            <person name="Chen H."/>
            <person name="Shinn P."/>
            <person name="Palm C.J."/>
            <person name="Southwick A.M."/>
            <person name="Wu H.C."/>
            <person name="Kim C.J."/>
            <person name="Nguyen M."/>
            <person name="Pham P.K."/>
            <person name="Cheuk R.F."/>
            <person name="Karlin-Newmann G."/>
            <person name="Liu S.X."/>
            <person name="Lam B."/>
            <person name="Sakano H."/>
            <person name="Wu T."/>
            <person name="Yu G."/>
            <person name="Miranda M."/>
            <person name="Quach H.L."/>
            <person name="Tripp M."/>
            <person name="Chang C.H."/>
            <person name="Lee J.M."/>
            <person name="Toriumi M.J."/>
            <person name="Chan M.M."/>
            <person name="Tang C.C."/>
            <person name="Onodera C.S."/>
            <person name="Deng J.M."/>
            <person name="Akiyama K."/>
            <person name="Ansari Y."/>
            <person name="Arakawa T."/>
            <person name="Banh J."/>
            <person name="Banno F."/>
            <person name="Bowser L."/>
            <person name="Brooks S.Y."/>
            <person name="Carninci P."/>
            <person name="Chao Q."/>
            <person name="Choy N."/>
            <person name="Enju A."/>
            <person name="Goldsmith A.D."/>
            <person name="Gurjal M."/>
            <person name="Hansen N.F."/>
            <person name="Hayashizaki Y."/>
            <person name="Johnson-Hopson C."/>
            <person name="Hsuan V.W."/>
            <person name="Iida K."/>
            <person name="Karnes M."/>
            <person name="Khan S."/>
            <person name="Koesema E."/>
            <person name="Ishida J."/>
            <person name="Jiang P.X."/>
            <person name="Jones T."/>
            <person name="Kawai J."/>
            <person name="Kamiya A."/>
            <person name="Meyers C."/>
            <person name="Nakajima M."/>
            <person name="Narusaka M."/>
            <person name="Seki M."/>
            <person name="Sakurai T."/>
            <person name="Satou M."/>
            <person name="Tamse R."/>
            <person name="Vaysberg M."/>
            <person name="Wallender E.K."/>
            <person name="Wong C."/>
            <person name="Yamamura Y."/>
            <person name="Yuan S."/>
            <person name="Shinozaki K."/>
            <person name="Davis R.W."/>
            <person name="Theologis A."/>
            <person name="Ecker J.R."/>
        </authorList>
    </citation>
    <scope>NUCLEOTIDE SEQUENCE [LARGE SCALE MRNA]</scope>
    <source>
        <strain>cv. Columbia</strain>
    </source>
</reference>
<reference key="4">
    <citation type="journal article" date="2001" name="Plant Physiol.">
        <title>The organization of cytoplasmic ribosomal protein genes in the Arabidopsis genome.</title>
        <authorList>
            <person name="Barakat A."/>
            <person name="Szick-Miranda K."/>
            <person name="Chang I.-F."/>
            <person name="Guyot R."/>
            <person name="Blanc G."/>
            <person name="Cooke R."/>
            <person name="Delseny M."/>
            <person name="Bailey-Serres J."/>
        </authorList>
    </citation>
    <scope>GENE FAMILY ORGANIZATION</scope>
    <scope>NOMENCLATURE</scope>
</reference>
<reference key="5">
    <citation type="journal article" date="2023" name="Plant Cell">
        <title>An updated nomenclature for plant ribosomal protein genes.</title>
        <authorList>
            <person name="Scarpin M.R."/>
            <person name="Busche M."/>
            <person name="Martinez R.E."/>
            <person name="Harper L.C."/>
            <person name="Reiser L."/>
            <person name="Szakonyi D."/>
            <person name="Merchante C."/>
            <person name="Lan T."/>
            <person name="Xiong W."/>
            <person name="Mo B."/>
            <person name="Tang G."/>
            <person name="Chen X."/>
            <person name="Bailey-Serres J."/>
            <person name="Browning K.S."/>
            <person name="Brunkard J.O."/>
        </authorList>
    </citation>
    <scope>NOMENCLATURE</scope>
</reference>
<comment type="similarity">
    <text evidence="2">Belongs to the universal ribosomal protein uL13 family.</text>
</comment>
<feature type="chain" id="PRO_0000133781" description="Large ribosomal subunit protein uL13y">
    <location>
        <begin position="1"/>
        <end position="206"/>
    </location>
</feature>
<feature type="sequence conflict" description="In Ref. 3; AAL87341." evidence="2" ref="3">
    <original>I</original>
    <variation>V</variation>
    <location>
        <position position="125"/>
    </location>
</feature>
<dbReference type="EMBL" id="AB028609">
    <property type="protein sequence ID" value="BAB02893.1"/>
    <property type="molecule type" value="Genomic_DNA"/>
</dbReference>
<dbReference type="EMBL" id="CP002686">
    <property type="protein sequence ID" value="AEE76951.1"/>
    <property type="molecule type" value="Genomic_DNA"/>
</dbReference>
<dbReference type="EMBL" id="AY080870">
    <property type="protein sequence ID" value="AAL87341.1"/>
    <property type="molecule type" value="mRNA"/>
</dbReference>
<dbReference type="EMBL" id="AY150392">
    <property type="protein sequence ID" value="AAN12937.1"/>
    <property type="molecule type" value="mRNA"/>
</dbReference>
<dbReference type="RefSeq" id="NP_189127.1">
    <property type="nucleotide sequence ID" value="NM_113395.4"/>
</dbReference>
<dbReference type="SMR" id="Q9LRX8"/>
<dbReference type="BioGRID" id="7412">
    <property type="interactions" value="46"/>
</dbReference>
<dbReference type="FunCoup" id="Q9LRX8">
    <property type="interactions" value="3134"/>
</dbReference>
<dbReference type="IntAct" id="Q9LRX8">
    <property type="interactions" value="1"/>
</dbReference>
<dbReference type="STRING" id="3702.Q9LRX8"/>
<dbReference type="iPTMnet" id="Q9LRX8"/>
<dbReference type="MetOSite" id="Q9LRX8"/>
<dbReference type="PaxDb" id="3702-AT3G24830.1"/>
<dbReference type="ProteomicsDB" id="224871"/>
<dbReference type="EnsemblPlants" id="AT3G24830.1">
    <property type="protein sequence ID" value="AT3G24830.1"/>
    <property type="gene ID" value="AT3G24830"/>
</dbReference>
<dbReference type="GeneID" id="822081"/>
<dbReference type="Gramene" id="AT3G24830.1">
    <property type="protein sequence ID" value="AT3G24830.1"/>
    <property type="gene ID" value="AT3G24830"/>
</dbReference>
<dbReference type="KEGG" id="ath:AT3G24830"/>
<dbReference type="Araport" id="AT3G24830"/>
<dbReference type="TAIR" id="AT3G24830"/>
<dbReference type="eggNOG" id="KOG3204">
    <property type="taxonomic scope" value="Eukaryota"/>
</dbReference>
<dbReference type="HOGENOM" id="CLU_076922_0_0_1"/>
<dbReference type="InParanoid" id="Q9LRX8"/>
<dbReference type="OMA" id="EVGWHYL"/>
<dbReference type="OrthoDB" id="1882297at2759"/>
<dbReference type="PhylomeDB" id="Q9LRX8"/>
<dbReference type="CD-CODE" id="4299E36E">
    <property type="entry name" value="Nucleolus"/>
</dbReference>
<dbReference type="PRO" id="PR:Q9LRX8"/>
<dbReference type="Proteomes" id="UP000006548">
    <property type="component" value="Chromosome 3"/>
</dbReference>
<dbReference type="ExpressionAtlas" id="Q9LRX8">
    <property type="expression patterns" value="baseline and differential"/>
</dbReference>
<dbReference type="GO" id="GO:0005829">
    <property type="term" value="C:cytosol"/>
    <property type="evidence" value="ECO:0007005"/>
    <property type="project" value="TAIR"/>
</dbReference>
<dbReference type="GO" id="GO:0022625">
    <property type="term" value="C:cytosolic large ribosomal subunit"/>
    <property type="evidence" value="ECO:0007005"/>
    <property type="project" value="TAIR"/>
</dbReference>
<dbReference type="GO" id="GO:0022626">
    <property type="term" value="C:cytosolic ribosome"/>
    <property type="evidence" value="ECO:0007005"/>
    <property type="project" value="TAIR"/>
</dbReference>
<dbReference type="GO" id="GO:0009506">
    <property type="term" value="C:plasmodesma"/>
    <property type="evidence" value="ECO:0007005"/>
    <property type="project" value="TAIR"/>
</dbReference>
<dbReference type="GO" id="GO:0003729">
    <property type="term" value="F:mRNA binding"/>
    <property type="evidence" value="ECO:0000314"/>
    <property type="project" value="TAIR"/>
</dbReference>
<dbReference type="GO" id="GO:0003735">
    <property type="term" value="F:structural constituent of ribosome"/>
    <property type="evidence" value="ECO:0000314"/>
    <property type="project" value="CAFA"/>
</dbReference>
<dbReference type="GO" id="GO:0006412">
    <property type="term" value="P:translation"/>
    <property type="evidence" value="ECO:0007669"/>
    <property type="project" value="InterPro"/>
</dbReference>
<dbReference type="CDD" id="cd00392">
    <property type="entry name" value="Ribosomal_L13"/>
    <property type="match status" value="1"/>
</dbReference>
<dbReference type="FunFam" id="6.10.250.3250:FF:000001">
    <property type="entry name" value="60S ribosomal protein L13a"/>
    <property type="match status" value="1"/>
</dbReference>
<dbReference type="FunFam" id="3.90.1180.10:FF:000003">
    <property type="entry name" value="60S ribosomal protein L13a-4"/>
    <property type="match status" value="1"/>
</dbReference>
<dbReference type="Gene3D" id="6.10.250.3250">
    <property type="match status" value="1"/>
</dbReference>
<dbReference type="Gene3D" id="3.90.1180.10">
    <property type="entry name" value="Ribosomal protein L13"/>
    <property type="match status" value="1"/>
</dbReference>
<dbReference type="HAMAP" id="MF_01366">
    <property type="entry name" value="Ribosomal_uL13"/>
    <property type="match status" value="1"/>
</dbReference>
<dbReference type="InterPro" id="IPR005822">
    <property type="entry name" value="Ribosomal_uL13"/>
</dbReference>
<dbReference type="InterPro" id="IPR023563">
    <property type="entry name" value="Ribosomal_uL13_CS"/>
</dbReference>
<dbReference type="InterPro" id="IPR005755">
    <property type="entry name" value="Ribosomal_uL13_euk/arc"/>
</dbReference>
<dbReference type="InterPro" id="IPR036899">
    <property type="entry name" value="Ribosomal_uL13_sf"/>
</dbReference>
<dbReference type="NCBIfam" id="TIGR01077">
    <property type="entry name" value="L13_A_E"/>
    <property type="match status" value="1"/>
</dbReference>
<dbReference type="PANTHER" id="PTHR11545:SF39">
    <property type="entry name" value="LARGE RIBOSOMAL SUBUNIT PROTEIN UL13X-RELATED"/>
    <property type="match status" value="1"/>
</dbReference>
<dbReference type="PANTHER" id="PTHR11545">
    <property type="entry name" value="RIBOSOMAL PROTEIN L13"/>
    <property type="match status" value="1"/>
</dbReference>
<dbReference type="Pfam" id="PF00572">
    <property type="entry name" value="Ribosomal_L13"/>
    <property type="match status" value="1"/>
</dbReference>
<dbReference type="SUPFAM" id="SSF52161">
    <property type="entry name" value="Ribosomal protein L13"/>
    <property type="match status" value="1"/>
</dbReference>
<dbReference type="PROSITE" id="PS00783">
    <property type="entry name" value="RIBOSOMAL_L13"/>
    <property type="match status" value="1"/>
</dbReference>
<accession>Q9LRX8</accession>
<accession>Q8RXI2</accession>
<gene>
    <name type="primary">RPL13AB</name>
    <name type="ordered locus">At3g24830</name>
    <name type="ORF">K7P8.12</name>
</gene>
<evidence type="ECO:0000303" key="1">
    <source>
    </source>
</evidence>
<evidence type="ECO:0000305" key="2"/>
<proteinExistence type="evidence at transcript level"/>
<protein>
    <recommendedName>
        <fullName evidence="1">Large ribosomal subunit protein uL13y</fullName>
    </recommendedName>
    <alternativeName>
        <fullName>60S ribosomal protein L13a-2</fullName>
    </alternativeName>
</protein>
<name>R13A2_ARATH</name>
<sequence length="206" mass="23459">MVSGSGICSKRVVVDARHHMCGRLASIIAKELLNGQSVVVVRCEEICLSGGLVRQKMKYMRFLRKRMNTKPSHGPIHFRAPSKIFWRTVRGMIPHKTKRGAAALARLKVFEGVPPPYDKVKRMVIPDALKVLRLQAGHKYCLLGRLSSEVGWNHYDTIKELEVKRKERSQALYERKKQLTKLRAKAEKVAEEKLGSQLDVLASIKY</sequence>
<organism>
    <name type="scientific">Arabidopsis thaliana</name>
    <name type="common">Mouse-ear cress</name>
    <dbReference type="NCBI Taxonomy" id="3702"/>
    <lineage>
        <taxon>Eukaryota</taxon>
        <taxon>Viridiplantae</taxon>
        <taxon>Streptophyta</taxon>
        <taxon>Embryophyta</taxon>
        <taxon>Tracheophyta</taxon>
        <taxon>Spermatophyta</taxon>
        <taxon>Magnoliopsida</taxon>
        <taxon>eudicotyledons</taxon>
        <taxon>Gunneridae</taxon>
        <taxon>Pentapetalae</taxon>
        <taxon>rosids</taxon>
        <taxon>malvids</taxon>
        <taxon>Brassicales</taxon>
        <taxon>Brassicaceae</taxon>
        <taxon>Camelineae</taxon>
        <taxon>Arabidopsis</taxon>
    </lineage>
</organism>
<keyword id="KW-1185">Reference proteome</keyword>
<keyword id="KW-0687">Ribonucleoprotein</keyword>
<keyword id="KW-0689">Ribosomal protein</keyword>